<proteinExistence type="evidence at protein level"/>
<organism>
    <name type="scientific">Mus musculus</name>
    <name type="common">Mouse</name>
    <dbReference type="NCBI Taxonomy" id="10090"/>
    <lineage>
        <taxon>Eukaryota</taxon>
        <taxon>Metazoa</taxon>
        <taxon>Chordata</taxon>
        <taxon>Craniata</taxon>
        <taxon>Vertebrata</taxon>
        <taxon>Euteleostomi</taxon>
        <taxon>Mammalia</taxon>
        <taxon>Eutheria</taxon>
        <taxon>Euarchontoglires</taxon>
        <taxon>Glires</taxon>
        <taxon>Rodentia</taxon>
        <taxon>Myomorpha</taxon>
        <taxon>Muroidea</taxon>
        <taxon>Muridae</taxon>
        <taxon>Murinae</taxon>
        <taxon>Mus</taxon>
        <taxon>Mus</taxon>
    </lineage>
</organism>
<keyword id="KW-0053">Apoptosis</keyword>
<keyword id="KW-0221">Differentiation</keyword>
<keyword id="KW-0256">Endoplasmic reticulum</keyword>
<keyword id="KW-0378">Hydrolase</keyword>
<keyword id="KW-0472">Membrane</keyword>
<keyword id="KW-0496">Mitochondrion</keyword>
<keyword id="KW-0645">Protease</keyword>
<keyword id="KW-1185">Reference proteome</keyword>
<keyword id="KW-0720">Serine protease</keyword>
<keyword id="KW-0744">Spermatogenesis</keyword>
<keyword id="KW-0812">Transmembrane</keyword>
<keyword id="KW-1133">Transmembrane helix</keyword>
<comment type="function">
    <text evidence="4 5">Intramembrane-cleaving serine protease that cleaves single transmembrane or multi-pass membrane proteins in the hydrophobic plane of the membrane, luminal loops and juxtamembrane regions. Involved in regulated intramembrane proteolysis and the subsequent release of functional polypeptides from their membrane anchors. Functional component of endoplasmic reticulum-associated degradation (ERAD) for misfolded membrane proteins. Required for the degradation process of some specific misfolded endoplasmic reticulum (ER) luminal proteins. Participates in the transfer of misfolded proteins from the ER to the cytosol, where they are destroyed by the proteasome in a ubiquitin-dependent manner. Functions in BIK, MPZ, PKD1, PTCRA, RHO, STEAP3 and TRAC processing. Involved in the regulation of exosomal secretion; inhibits the TSAP6-mediated secretion pathway. Involved in the regulation of apoptosis; modulates BIK-mediated apoptotic activity. Also plays a role in the regulation of spermatogenesis; inhibits apoptotic activity in spermatogonia.</text>
</comment>
<comment type="catalytic activity">
    <reaction>
        <text>Cleaves type-1 transmembrane domains using a catalytic dyad composed of serine and histidine that are contributed by different transmembrane domains.</text>
        <dbReference type="EC" id="3.4.21.105"/>
    </reaction>
</comment>
<comment type="activity regulation">
    <text evidence="1">Inhibited by aprotinin.</text>
</comment>
<comment type="subunit">
    <text evidence="1 5">Interacts with BIK and STEAP3 (By similarity). Interacts (via C-terminal domain) with VCP/P97. Interacts with ubiquitin and ubiquitinated proteins.</text>
</comment>
<comment type="subcellular location">
    <subcellularLocation>
        <location evidence="5">Endoplasmic reticulum membrane</location>
        <topology evidence="6">Multi-pass membrane protein</topology>
    </subcellularLocation>
    <subcellularLocation>
        <location evidence="2">Mitochondrion membrane</location>
        <topology evidence="6">Multi-pass membrane protein</topology>
    </subcellularLocation>
</comment>
<comment type="tissue specificity">
    <text evidence="4">Expressed in testis (at protein level). Expressed in intestine, lung, brain, kidney, epididymis, stomach, muscle, spleen, liver, heart and testis.</text>
</comment>
<comment type="similarity">
    <text evidence="6">Belongs to the peptidase S54 family.</text>
</comment>
<comment type="caution">
    <text evidence="7">One study reported that the protein is not localized in the mitochondrion.</text>
</comment>
<feature type="chain" id="PRO_0000254190" description="Rhomboid-related protein 4">
    <location>
        <begin position="1"/>
        <end position="315"/>
    </location>
</feature>
<feature type="topological domain" description="Cytoplasmic" evidence="3">
    <location>
        <begin position="1"/>
        <end position="21"/>
    </location>
</feature>
<feature type="transmembrane region" description="Helical" evidence="3">
    <location>
        <begin position="22"/>
        <end position="42"/>
    </location>
</feature>
<feature type="topological domain" description="Lumenal" evidence="3">
    <location>
        <begin position="43"/>
        <end position="103"/>
    </location>
</feature>
<feature type="transmembrane region" description="Helical" evidence="3">
    <location>
        <begin position="104"/>
        <end position="124"/>
    </location>
</feature>
<feature type="topological domain" description="Cytoplasmic" evidence="3">
    <location>
        <begin position="125"/>
        <end position="137"/>
    </location>
</feature>
<feature type="transmembrane region" description="Helical" evidence="3">
    <location>
        <begin position="138"/>
        <end position="154"/>
    </location>
</feature>
<feature type="topological domain" description="Lumenal" evidence="3">
    <location>
        <begin position="155"/>
        <end position="180"/>
    </location>
</feature>
<feature type="transmembrane region" description="Helical" evidence="3">
    <location>
        <begin position="181"/>
        <end position="201"/>
    </location>
</feature>
<feature type="topological domain" description="Cytoplasmic" evidence="3">
    <location>
        <begin position="202"/>
        <end position="315"/>
    </location>
</feature>
<feature type="region of interest" description="Ubiquitin-binding domain (UBD)">
    <location>
        <begin position="269"/>
        <end position="284"/>
    </location>
</feature>
<feature type="region of interest" description="VCP/p97-interacting motif (VIM)">
    <location>
        <begin position="301"/>
        <end position="315"/>
    </location>
</feature>
<feature type="active site" description="Nucleophile" evidence="1">
    <location>
        <position position="144"/>
    </location>
</feature>
<feature type="active site" evidence="1">
    <location>
        <position position="195"/>
    </location>
</feature>
<feature type="mutagenesis site" description="Enzyme inactivation. Reduces the cleavage of PTCRA and TRAC. Does not inhibit interaction with PTCRA. Stimulates interaction with ubiquitinated proteins." evidence="5">
    <original>S</original>
    <variation>A</variation>
    <location>
        <position position="144"/>
    </location>
</feature>
<feature type="mutagenesis site" description="Inhibits interaction with ubiquitin and ubiquitinated proteins; when associated with A-278. Reduces the cleavage of PTCRA; when associated with A-278." evidence="5">
    <original>L</original>
    <variation>A</variation>
    <location>
        <position position="274"/>
    </location>
</feature>
<feature type="mutagenesis site" description="Inhibits interaction with ubiquitin and ubiquitinated proteins; when associated with A-274. Reduces the cleavage of PTCRA; when associated with A-274." evidence="5">
    <original>L</original>
    <variation>A</variation>
    <location>
        <position position="278"/>
    </location>
</feature>
<feature type="sequence conflict" description="In Ref. 3; AAH05518." evidence="6" ref="3">
    <original>L</original>
    <variation>M</variation>
    <location>
        <position position="130"/>
    </location>
</feature>
<feature type="sequence conflict" description="In Ref. 3; AAH05518." evidence="6" ref="3">
    <original>T</original>
    <variation>M</variation>
    <location>
        <position position="216"/>
    </location>
</feature>
<feature type="sequence conflict" description="In Ref. 3; AAH05518." evidence="6" ref="3">
    <original>A</original>
    <variation>S</variation>
    <location>
        <position position="225"/>
    </location>
</feature>
<feature type="sequence conflict" description="In Ref. 2; BAB29735." evidence="6" ref="2">
    <original>R</original>
    <variation>G</variation>
    <location>
        <position position="250"/>
    </location>
</feature>
<feature type="sequence conflict" description="In Ref. 2; BAB29735." evidence="6" ref="2">
    <original>R</original>
    <variation>Q</variation>
    <location>
        <position position="298"/>
    </location>
</feature>
<dbReference type="EC" id="3.4.21.105"/>
<dbReference type="EMBL" id="AY973322">
    <property type="protein sequence ID" value="AAY41235.1"/>
    <property type="molecule type" value="mRNA"/>
</dbReference>
<dbReference type="EMBL" id="AK015167">
    <property type="protein sequence ID" value="BAB29735.1"/>
    <property type="molecule type" value="mRNA"/>
</dbReference>
<dbReference type="EMBL" id="AK029751">
    <property type="protein sequence ID" value="BAC26597.1"/>
    <property type="molecule type" value="mRNA"/>
</dbReference>
<dbReference type="EMBL" id="AK076751">
    <property type="protein sequence ID" value="BAC36465.1"/>
    <property type="molecule type" value="mRNA"/>
</dbReference>
<dbReference type="EMBL" id="AK079448">
    <property type="protein sequence ID" value="BAC37647.1"/>
    <property type="molecule type" value="mRNA"/>
</dbReference>
<dbReference type="EMBL" id="AK142277">
    <property type="protein sequence ID" value="BAE25005.1"/>
    <property type="molecule type" value="mRNA"/>
</dbReference>
<dbReference type="EMBL" id="BC005518">
    <property type="protein sequence ID" value="AAH05518.1"/>
    <property type="molecule type" value="mRNA"/>
</dbReference>
<dbReference type="CCDS" id="CCDS15097.1"/>
<dbReference type="RefSeq" id="NP_001116157.1">
    <property type="nucleotide sequence ID" value="NM_001122685.2"/>
</dbReference>
<dbReference type="RefSeq" id="NP_001418943.1">
    <property type="nucleotide sequence ID" value="NM_001432014.1"/>
</dbReference>
<dbReference type="RefSeq" id="NP_084053.3">
    <property type="nucleotide sequence ID" value="NM_029777.3"/>
</dbReference>
<dbReference type="RefSeq" id="XP_006496637.1">
    <property type="nucleotide sequence ID" value="XM_006496574.3"/>
</dbReference>
<dbReference type="BioGRID" id="218363">
    <property type="interactions" value="1"/>
</dbReference>
<dbReference type="FunCoup" id="Q8BHC7">
    <property type="interactions" value="1744"/>
</dbReference>
<dbReference type="IntAct" id="Q8BHC7">
    <property type="interactions" value="1"/>
</dbReference>
<dbReference type="STRING" id="10090.ENSMUSP00000137770"/>
<dbReference type="ChEMBL" id="CHEMBL3259510"/>
<dbReference type="MEROPS" id="S54.954"/>
<dbReference type="iPTMnet" id="Q8BHC7"/>
<dbReference type="PhosphoSitePlus" id="Q8BHC7"/>
<dbReference type="PaxDb" id="10090-ENSMUSP00000137770"/>
<dbReference type="PeptideAtlas" id="Q8BHC7"/>
<dbReference type="ProteomicsDB" id="253270"/>
<dbReference type="Pumba" id="Q8BHC7"/>
<dbReference type="Antibodypedia" id="3019">
    <property type="antibodies" value="73 antibodies from 25 providers"/>
</dbReference>
<dbReference type="DNASU" id="76867"/>
<dbReference type="Ensembl" id="ENSMUST00000027322.14">
    <property type="protein sequence ID" value="ENSMUSP00000027322.8"/>
    <property type="gene ID" value="ENSMUSG00000026142.16"/>
</dbReference>
<dbReference type="Ensembl" id="ENSMUST00000140020.2">
    <property type="protein sequence ID" value="ENSMUSP00000137770.2"/>
    <property type="gene ID" value="ENSMUSG00000026142.16"/>
</dbReference>
<dbReference type="GeneID" id="76867"/>
<dbReference type="KEGG" id="mmu:76867"/>
<dbReference type="UCSC" id="uc007brq.3">
    <property type="organism name" value="mouse"/>
</dbReference>
<dbReference type="AGR" id="MGI:1924117"/>
<dbReference type="CTD" id="84236"/>
<dbReference type="MGI" id="MGI:1924117">
    <property type="gene designation" value="Rhbdd1"/>
</dbReference>
<dbReference type="VEuPathDB" id="HostDB:ENSMUSG00000026142"/>
<dbReference type="eggNOG" id="KOG2632">
    <property type="taxonomic scope" value="Eukaryota"/>
</dbReference>
<dbReference type="GeneTree" id="ENSGT00390000010744"/>
<dbReference type="HOGENOM" id="CLU_075166_0_0_1"/>
<dbReference type="InParanoid" id="Q8BHC7"/>
<dbReference type="OMA" id="IWFAYII"/>
<dbReference type="OrthoDB" id="10257275at2759"/>
<dbReference type="PhylomeDB" id="Q8BHC7"/>
<dbReference type="TreeFam" id="TF328476"/>
<dbReference type="BRENDA" id="3.4.21.108">
    <property type="organism ID" value="3474"/>
</dbReference>
<dbReference type="BioGRID-ORCS" id="76867">
    <property type="hits" value="2 hits in 79 CRISPR screens"/>
</dbReference>
<dbReference type="ChiTaRS" id="Rhbdl3">
    <property type="organism name" value="mouse"/>
</dbReference>
<dbReference type="PRO" id="PR:Q8BHC7"/>
<dbReference type="Proteomes" id="UP000000589">
    <property type="component" value="Chromosome 1"/>
</dbReference>
<dbReference type="RNAct" id="Q8BHC7">
    <property type="molecule type" value="protein"/>
</dbReference>
<dbReference type="Bgee" id="ENSMUSG00000026142">
    <property type="expression patterns" value="Expressed in seminal vesicle and 211 other cell types or tissues"/>
</dbReference>
<dbReference type="GO" id="GO:0005789">
    <property type="term" value="C:endoplasmic reticulum membrane"/>
    <property type="evidence" value="ECO:0000314"/>
    <property type="project" value="UniProtKB"/>
</dbReference>
<dbReference type="GO" id="GO:0044322">
    <property type="term" value="C:endoplasmic reticulum quality control compartment"/>
    <property type="evidence" value="ECO:0000314"/>
    <property type="project" value="UniProtKB"/>
</dbReference>
<dbReference type="GO" id="GO:0031966">
    <property type="term" value="C:mitochondrial membrane"/>
    <property type="evidence" value="ECO:0007669"/>
    <property type="project" value="UniProtKB-SubCell"/>
</dbReference>
<dbReference type="GO" id="GO:0004175">
    <property type="term" value="F:endopeptidase activity"/>
    <property type="evidence" value="ECO:0000250"/>
    <property type="project" value="UniProtKB"/>
</dbReference>
<dbReference type="GO" id="GO:0008233">
    <property type="term" value="F:peptidase activity"/>
    <property type="evidence" value="ECO:0000314"/>
    <property type="project" value="ParkinsonsUK-UCL"/>
</dbReference>
<dbReference type="GO" id="GO:0004252">
    <property type="term" value="F:serine-type endopeptidase activity"/>
    <property type="evidence" value="ECO:0000250"/>
    <property type="project" value="UniProtKB"/>
</dbReference>
<dbReference type="GO" id="GO:0006915">
    <property type="term" value="P:apoptotic process"/>
    <property type="evidence" value="ECO:0007669"/>
    <property type="project" value="UniProtKB-KW"/>
</dbReference>
<dbReference type="GO" id="GO:0034620">
    <property type="term" value="P:cellular response to unfolded protein"/>
    <property type="evidence" value="ECO:0000314"/>
    <property type="project" value="UniProtKB"/>
</dbReference>
<dbReference type="GO" id="GO:0034644">
    <property type="term" value="P:cellular response to UV"/>
    <property type="evidence" value="ECO:0000314"/>
    <property type="project" value="UniProtKB"/>
</dbReference>
<dbReference type="GO" id="GO:0036503">
    <property type="term" value="P:ERAD pathway"/>
    <property type="evidence" value="ECO:0000314"/>
    <property type="project" value="UniProtKB"/>
</dbReference>
<dbReference type="GO" id="GO:0031293">
    <property type="term" value="P:membrane protein intracellular domain proteolysis"/>
    <property type="evidence" value="ECO:0000314"/>
    <property type="project" value="UniProtKB"/>
</dbReference>
<dbReference type="GO" id="GO:0033619">
    <property type="term" value="P:membrane protein proteolysis"/>
    <property type="evidence" value="ECO:0000250"/>
    <property type="project" value="UniProtKB"/>
</dbReference>
<dbReference type="GO" id="GO:1904211">
    <property type="term" value="P:membrane protein proteolysis involved in retrograde protein transport, ER to cytosol"/>
    <property type="evidence" value="ECO:0000314"/>
    <property type="project" value="ParkinsonsUK-UCL"/>
</dbReference>
<dbReference type="GO" id="GO:0043066">
    <property type="term" value="P:negative regulation of apoptotic process"/>
    <property type="evidence" value="ECO:0000315"/>
    <property type="project" value="UniProtKB"/>
</dbReference>
<dbReference type="GO" id="GO:0045732">
    <property type="term" value="P:positive regulation of protein catabolic process"/>
    <property type="evidence" value="ECO:0000250"/>
    <property type="project" value="UniProtKB"/>
</dbReference>
<dbReference type="GO" id="GO:0010954">
    <property type="term" value="P:positive regulation of protein processing"/>
    <property type="evidence" value="ECO:0000314"/>
    <property type="project" value="UniProtKB"/>
</dbReference>
<dbReference type="GO" id="GO:0051047">
    <property type="term" value="P:positive regulation of secretion"/>
    <property type="evidence" value="ECO:0000250"/>
    <property type="project" value="UniProtKB"/>
</dbReference>
<dbReference type="GO" id="GO:0043687">
    <property type="term" value="P:post-translational protein modification"/>
    <property type="evidence" value="ECO:0000314"/>
    <property type="project" value="UniProtKB"/>
</dbReference>
<dbReference type="GO" id="GO:0048515">
    <property type="term" value="P:spermatid differentiation"/>
    <property type="evidence" value="ECO:0000315"/>
    <property type="project" value="UniProtKB"/>
</dbReference>
<dbReference type="FunFam" id="1.20.1540.10:FF:000009">
    <property type="entry name" value="Rhomboid domain containing 1"/>
    <property type="match status" value="1"/>
</dbReference>
<dbReference type="Gene3D" id="1.20.1540.10">
    <property type="entry name" value="Rhomboid-like"/>
    <property type="match status" value="1"/>
</dbReference>
<dbReference type="InterPro" id="IPR022764">
    <property type="entry name" value="Peptidase_S54_rhomboid_dom"/>
</dbReference>
<dbReference type="InterPro" id="IPR035952">
    <property type="entry name" value="Rhomboid-like_sf"/>
</dbReference>
<dbReference type="PANTHER" id="PTHR43066">
    <property type="entry name" value="RHOMBOID-RELATED PROTEIN"/>
    <property type="match status" value="1"/>
</dbReference>
<dbReference type="PANTHER" id="PTHR43066:SF14">
    <property type="entry name" value="RHOMBOID-RELATED PROTEIN 4"/>
    <property type="match status" value="1"/>
</dbReference>
<dbReference type="Pfam" id="PF01694">
    <property type="entry name" value="Rhomboid"/>
    <property type="match status" value="1"/>
</dbReference>
<dbReference type="SUPFAM" id="SSF144091">
    <property type="entry name" value="Rhomboid-like"/>
    <property type="match status" value="1"/>
</dbReference>
<name>RHBL4_MOUSE</name>
<accession>Q8BHC7</accession>
<accession>Q99K13</accession>
<accession>Q9D5L8</accession>
<protein>
    <recommendedName>
        <fullName>Rhomboid-related protein 4</fullName>
        <shortName>RRP4</shortName>
        <ecNumber>3.4.21.105</ecNumber>
    </recommendedName>
    <alternativeName>
        <fullName>Rhomboid domain-containing protein 1</fullName>
        <shortName>mRHBDD1</shortName>
    </alternativeName>
    <alternativeName>
        <fullName>Rhomboid-like protein 4</fullName>
    </alternativeName>
</protein>
<evidence type="ECO:0000250" key="1"/>
<evidence type="ECO:0000250" key="2">
    <source>
        <dbReference type="UniProtKB" id="Q8TEB9"/>
    </source>
</evidence>
<evidence type="ECO:0000255" key="3"/>
<evidence type="ECO:0000269" key="4">
    <source>
    </source>
</evidence>
<evidence type="ECO:0000269" key="5">
    <source>
    </source>
</evidence>
<evidence type="ECO:0000305" key="6"/>
<evidence type="ECO:0000305" key="7">
    <source>
    </source>
</evidence>
<reference key="1">
    <citation type="submission" date="2005-03" db="EMBL/GenBank/DDBJ databases">
        <title>A new spermatogenesis-related gene.</title>
        <authorList>
            <person name="Wang Y."/>
            <person name="Miao S.Y."/>
            <person name="Zhang X.D."/>
            <person name="Qiao Y."/>
            <person name="Liang G."/>
            <person name="Wang L.F."/>
        </authorList>
    </citation>
    <scope>NUCLEOTIDE SEQUENCE [LARGE SCALE MRNA]</scope>
    <source>
        <strain>Swiss Webster / NIH</strain>
        <tissue>Testis</tissue>
    </source>
</reference>
<reference key="2">
    <citation type="journal article" date="2005" name="Science">
        <title>The transcriptional landscape of the mammalian genome.</title>
        <authorList>
            <person name="Carninci P."/>
            <person name="Kasukawa T."/>
            <person name="Katayama S."/>
            <person name="Gough J."/>
            <person name="Frith M.C."/>
            <person name="Maeda N."/>
            <person name="Oyama R."/>
            <person name="Ravasi T."/>
            <person name="Lenhard B."/>
            <person name="Wells C."/>
            <person name="Kodzius R."/>
            <person name="Shimokawa K."/>
            <person name="Bajic V.B."/>
            <person name="Brenner S.E."/>
            <person name="Batalov S."/>
            <person name="Forrest A.R."/>
            <person name="Zavolan M."/>
            <person name="Davis M.J."/>
            <person name="Wilming L.G."/>
            <person name="Aidinis V."/>
            <person name="Allen J.E."/>
            <person name="Ambesi-Impiombato A."/>
            <person name="Apweiler R."/>
            <person name="Aturaliya R.N."/>
            <person name="Bailey T.L."/>
            <person name="Bansal M."/>
            <person name="Baxter L."/>
            <person name="Beisel K.W."/>
            <person name="Bersano T."/>
            <person name="Bono H."/>
            <person name="Chalk A.M."/>
            <person name="Chiu K.P."/>
            <person name="Choudhary V."/>
            <person name="Christoffels A."/>
            <person name="Clutterbuck D.R."/>
            <person name="Crowe M.L."/>
            <person name="Dalla E."/>
            <person name="Dalrymple B.P."/>
            <person name="de Bono B."/>
            <person name="Della Gatta G."/>
            <person name="di Bernardo D."/>
            <person name="Down T."/>
            <person name="Engstrom P."/>
            <person name="Fagiolini M."/>
            <person name="Faulkner G."/>
            <person name="Fletcher C.F."/>
            <person name="Fukushima T."/>
            <person name="Furuno M."/>
            <person name="Futaki S."/>
            <person name="Gariboldi M."/>
            <person name="Georgii-Hemming P."/>
            <person name="Gingeras T.R."/>
            <person name="Gojobori T."/>
            <person name="Green R.E."/>
            <person name="Gustincich S."/>
            <person name="Harbers M."/>
            <person name="Hayashi Y."/>
            <person name="Hensch T.K."/>
            <person name="Hirokawa N."/>
            <person name="Hill D."/>
            <person name="Huminiecki L."/>
            <person name="Iacono M."/>
            <person name="Ikeo K."/>
            <person name="Iwama A."/>
            <person name="Ishikawa T."/>
            <person name="Jakt M."/>
            <person name="Kanapin A."/>
            <person name="Katoh M."/>
            <person name="Kawasawa Y."/>
            <person name="Kelso J."/>
            <person name="Kitamura H."/>
            <person name="Kitano H."/>
            <person name="Kollias G."/>
            <person name="Krishnan S.P."/>
            <person name="Kruger A."/>
            <person name="Kummerfeld S.K."/>
            <person name="Kurochkin I.V."/>
            <person name="Lareau L.F."/>
            <person name="Lazarevic D."/>
            <person name="Lipovich L."/>
            <person name="Liu J."/>
            <person name="Liuni S."/>
            <person name="McWilliam S."/>
            <person name="Madan Babu M."/>
            <person name="Madera M."/>
            <person name="Marchionni L."/>
            <person name="Matsuda H."/>
            <person name="Matsuzawa S."/>
            <person name="Miki H."/>
            <person name="Mignone F."/>
            <person name="Miyake S."/>
            <person name="Morris K."/>
            <person name="Mottagui-Tabar S."/>
            <person name="Mulder N."/>
            <person name="Nakano N."/>
            <person name="Nakauchi H."/>
            <person name="Ng P."/>
            <person name="Nilsson R."/>
            <person name="Nishiguchi S."/>
            <person name="Nishikawa S."/>
            <person name="Nori F."/>
            <person name="Ohara O."/>
            <person name="Okazaki Y."/>
            <person name="Orlando V."/>
            <person name="Pang K.C."/>
            <person name="Pavan W.J."/>
            <person name="Pavesi G."/>
            <person name="Pesole G."/>
            <person name="Petrovsky N."/>
            <person name="Piazza S."/>
            <person name="Reed J."/>
            <person name="Reid J.F."/>
            <person name="Ring B.Z."/>
            <person name="Ringwald M."/>
            <person name="Rost B."/>
            <person name="Ruan Y."/>
            <person name="Salzberg S.L."/>
            <person name="Sandelin A."/>
            <person name="Schneider C."/>
            <person name="Schoenbach C."/>
            <person name="Sekiguchi K."/>
            <person name="Semple C.A."/>
            <person name="Seno S."/>
            <person name="Sessa L."/>
            <person name="Sheng Y."/>
            <person name="Shibata Y."/>
            <person name="Shimada H."/>
            <person name="Shimada K."/>
            <person name="Silva D."/>
            <person name="Sinclair B."/>
            <person name="Sperling S."/>
            <person name="Stupka E."/>
            <person name="Sugiura K."/>
            <person name="Sultana R."/>
            <person name="Takenaka Y."/>
            <person name="Taki K."/>
            <person name="Tammoja K."/>
            <person name="Tan S.L."/>
            <person name="Tang S."/>
            <person name="Taylor M.S."/>
            <person name="Tegner J."/>
            <person name="Teichmann S.A."/>
            <person name="Ueda H.R."/>
            <person name="van Nimwegen E."/>
            <person name="Verardo R."/>
            <person name="Wei C.L."/>
            <person name="Yagi K."/>
            <person name="Yamanishi H."/>
            <person name="Zabarovsky E."/>
            <person name="Zhu S."/>
            <person name="Zimmer A."/>
            <person name="Hide W."/>
            <person name="Bult C."/>
            <person name="Grimmond S.M."/>
            <person name="Teasdale R.D."/>
            <person name="Liu E.T."/>
            <person name="Brusic V."/>
            <person name="Quackenbush J."/>
            <person name="Wahlestedt C."/>
            <person name="Mattick J.S."/>
            <person name="Hume D.A."/>
            <person name="Kai C."/>
            <person name="Sasaki D."/>
            <person name="Tomaru Y."/>
            <person name="Fukuda S."/>
            <person name="Kanamori-Katayama M."/>
            <person name="Suzuki M."/>
            <person name="Aoki J."/>
            <person name="Arakawa T."/>
            <person name="Iida J."/>
            <person name="Imamura K."/>
            <person name="Itoh M."/>
            <person name="Kato T."/>
            <person name="Kawaji H."/>
            <person name="Kawagashira N."/>
            <person name="Kawashima T."/>
            <person name="Kojima M."/>
            <person name="Kondo S."/>
            <person name="Konno H."/>
            <person name="Nakano K."/>
            <person name="Ninomiya N."/>
            <person name="Nishio T."/>
            <person name="Okada M."/>
            <person name="Plessy C."/>
            <person name="Shibata K."/>
            <person name="Shiraki T."/>
            <person name="Suzuki S."/>
            <person name="Tagami M."/>
            <person name="Waki K."/>
            <person name="Watahiki A."/>
            <person name="Okamura-Oho Y."/>
            <person name="Suzuki H."/>
            <person name="Kawai J."/>
            <person name="Hayashizaki Y."/>
        </authorList>
    </citation>
    <scope>NUCLEOTIDE SEQUENCE [LARGE SCALE MRNA]</scope>
    <source>
        <strain>C57BL/6J</strain>
        <tissue>Heart</tissue>
        <tissue>Testis</tissue>
        <tissue>Vagina</tissue>
    </source>
</reference>
<reference key="3">
    <citation type="journal article" date="2004" name="Genome Res.">
        <title>The status, quality, and expansion of the NIH full-length cDNA project: the Mammalian Gene Collection (MGC).</title>
        <authorList>
            <consortium name="The MGC Project Team"/>
        </authorList>
    </citation>
    <scope>NUCLEOTIDE SEQUENCE [LARGE SCALE MRNA]</scope>
    <source>
        <strain>Czech II</strain>
        <tissue>Mammary tumor</tissue>
    </source>
</reference>
<reference key="4">
    <citation type="journal article" date="2009" name="BMC Cell Biol.">
        <title>GC-1 mRHBDD1 knockdown spermatogonia cells lose their spermatogenic capacity in mouse seminiferous tubules.</title>
        <authorList>
            <person name="Wang Y."/>
            <person name="Song W."/>
            <person name="Li S."/>
            <person name="Guan X."/>
            <person name="Miao S."/>
            <person name="Zong S."/>
            <person name="Koide S.S."/>
            <person name="Wang L."/>
        </authorList>
    </citation>
    <scope>FUNCTION IN APOPTOSIS</scope>
    <scope>TISSUE SPECIFICITY</scope>
</reference>
<reference key="5">
    <citation type="journal article" date="2010" name="Cell">
        <title>A tissue-specific atlas of mouse protein phosphorylation and expression.</title>
        <authorList>
            <person name="Huttlin E.L."/>
            <person name="Jedrychowski M.P."/>
            <person name="Elias J.E."/>
            <person name="Goswami T."/>
            <person name="Rad R."/>
            <person name="Beausoleil S.A."/>
            <person name="Villen J."/>
            <person name="Haas W."/>
            <person name="Sowa M.E."/>
            <person name="Gygi S.P."/>
        </authorList>
    </citation>
    <scope>IDENTIFICATION BY MASS SPECTROMETRY [LARGE SCALE ANALYSIS]</scope>
    <source>
        <tissue>Liver</tissue>
        <tissue>Lung</tissue>
        <tissue>Testis</tissue>
    </source>
</reference>
<reference key="6">
    <citation type="journal article" date="2012" name="Mol. Cell">
        <title>Ubiquitin-dependent intramembrane rhomboid protease promotes ERAD of membrane proteins.</title>
        <authorList>
            <person name="Fleig L."/>
            <person name="Bergbold N."/>
            <person name="Sahasrabudhe P."/>
            <person name="Geiger B."/>
            <person name="Kaltak L."/>
            <person name="Lemberg M.K."/>
        </authorList>
    </citation>
    <scope>FUNCTION</scope>
    <scope>INTERACTION WITH PTCRA; UBIQUITIN AND VCP</scope>
    <scope>TOPOLOGY</scope>
    <scope>SUBCELLULAR LOCATION</scope>
    <scope>MUTAGENESIS OF SER-144; LEU-274 AND LEU-278</scope>
</reference>
<gene>
    <name type="primary">Rhbdd1</name>
    <name type="synonym">Rhbdl4</name>
    <name type="ORF">MSD-50</name>
    <name type="ORF">MSD50</name>
</gene>
<sequence>MQRRTRGINTGLLLLLSQVFQIGINNIPPVTLATLAVNVWFFLNPWKPLYHSCISVEKCYQQKDWQRLLLSPLHHGDDWHLYFNMVSMLWKGVKLERRLGSRWFAYVIATFSLLTGVVYLLLQFTVAELLNQPDFKRNCAVGFSGVLFALKVLSNHYCPGGFVNILGFPVPNRFACWAELVAIHFCTPGTSFAGHLAGILVGLMYTQGPLKKIMDTCAGIFISHAGPSGQQNHFNNAGPSGYQNHYADGRPVTYDATYRNYDVYTAGLSEEEQLERALRASIWDRGNTRNGPMPYGFRLPPEEMRRQRLHRFDGQ</sequence>